<name>RUVA_SALCH</name>
<comment type="function">
    <text evidence="1">The RuvA-RuvB-RuvC complex processes Holliday junction (HJ) DNA during genetic recombination and DNA repair, while the RuvA-RuvB complex plays an important role in the rescue of blocked DNA replication forks via replication fork reversal (RFR). RuvA specifically binds to HJ cruciform DNA, conferring on it an open structure. The RuvB hexamer acts as an ATP-dependent pump, pulling dsDNA into and through the RuvAB complex. HJ branch migration allows RuvC to scan DNA until it finds its consensus sequence, where it cleaves and resolves the cruciform DNA.</text>
</comment>
<comment type="subunit">
    <text evidence="1">Homotetramer. Forms an RuvA(8)-RuvB(12)-Holliday junction (HJ) complex. HJ DNA is sandwiched between 2 RuvA tetramers; dsDNA enters through RuvA and exits via RuvB. An RuvB hexamer assembles on each DNA strand where it exits the tetramer. Each RuvB hexamer is contacted by two RuvA subunits (via domain III) on 2 adjacent RuvB subunits; this complex drives branch migration. In the full resolvosome a probable DNA-RuvA(4)-RuvB(12)-RuvC(2) complex forms which resolves the HJ.</text>
</comment>
<comment type="subcellular location">
    <subcellularLocation>
        <location evidence="1">Cytoplasm</location>
    </subcellularLocation>
</comment>
<comment type="domain">
    <text evidence="1">Has three domains with a flexible linker between the domains II and III and assumes an 'L' shape. Domain III is highly mobile and contacts RuvB.</text>
</comment>
<comment type="similarity">
    <text evidence="1">Belongs to the RuvA family.</text>
</comment>
<sequence length="203" mass="22173">MIGRLRGIILEKQPPIVLLETGGVGYEVHMPMTCFYELPEAGQEAIVFTHFVVREDAQLLYGFNNKQERTLFKELIKTNGVGPKLALAILSGMSAQQFVNAVEREELGALVKLPGIGKKTAERLIVEMKDRFKGLHGDLFTPAVDLVLTSPASPTSEDAEQEAVAALVALGYKPQEASRMVNKIARPDASSETLIRDALRAAL</sequence>
<organism>
    <name type="scientific">Salmonella choleraesuis (strain SC-B67)</name>
    <dbReference type="NCBI Taxonomy" id="321314"/>
    <lineage>
        <taxon>Bacteria</taxon>
        <taxon>Pseudomonadati</taxon>
        <taxon>Pseudomonadota</taxon>
        <taxon>Gammaproteobacteria</taxon>
        <taxon>Enterobacterales</taxon>
        <taxon>Enterobacteriaceae</taxon>
        <taxon>Salmonella</taxon>
    </lineage>
</organism>
<proteinExistence type="inferred from homology"/>
<accession>Q57NA2</accession>
<dbReference type="EMBL" id="AE017220">
    <property type="protein sequence ID" value="AAX65809.1"/>
    <property type="molecule type" value="Genomic_DNA"/>
</dbReference>
<dbReference type="RefSeq" id="WP_000580334.1">
    <property type="nucleotide sequence ID" value="NC_006905.1"/>
</dbReference>
<dbReference type="SMR" id="Q57NA2"/>
<dbReference type="KEGG" id="sec:SCH_1903"/>
<dbReference type="HOGENOM" id="CLU_087936_0_0_6"/>
<dbReference type="Proteomes" id="UP000000538">
    <property type="component" value="Chromosome"/>
</dbReference>
<dbReference type="GO" id="GO:0005737">
    <property type="term" value="C:cytoplasm"/>
    <property type="evidence" value="ECO:0007669"/>
    <property type="project" value="UniProtKB-SubCell"/>
</dbReference>
<dbReference type="GO" id="GO:0009379">
    <property type="term" value="C:Holliday junction helicase complex"/>
    <property type="evidence" value="ECO:0007669"/>
    <property type="project" value="InterPro"/>
</dbReference>
<dbReference type="GO" id="GO:0048476">
    <property type="term" value="C:Holliday junction resolvase complex"/>
    <property type="evidence" value="ECO:0007669"/>
    <property type="project" value="UniProtKB-UniRule"/>
</dbReference>
<dbReference type="GO" id="GO:0005524">
    <property type="term" value="F:ATP binding"/>
    <property type="evidence" value="ECO:0007669"/>
    <property type="project" value="InterPro"/>
</dbReference>
<dbReference type="GO" id="GO:0000400">
    <property type="term" value="F:four-way junction DNA binding"/>
    <property type="evidence" value="ECO:0007669"/>
    <property type="project" value="UniProtKB-UniRule"/>
</dbReference>
<dbReference type="GO" id="GO:0009378">
    <property type="term" value="F:four-way junction helicase activity"/>
    <property type="evidence" value="ECO:0007669"/>
    <property type="project" value="InterPro"/>
</dbReference>
<dbReference type="GO" id="GO:0006310">
    <property type="term" value="P:DNA recombination"/>
    <property type="evidence" value="ECO:0007669"/>
    <property type="project" value="UniProtKB-UniRule"/>
</dbReference>
<dbReference type="GO" id="GO:0006281">
    <property type="term" value="P:DNA repair"/>
    <property type="evidence" value="ECO:0007669"/>
    <property type="project" value="UniProtKB-UniRule"/>
</dbReference>
<dbReference type="CDD" id="cd14332">
    <property type="entry name" value="UBA_RuvA_C"/>
    <property type="match status" value="1"/>
</dbReference>
<dbReference type="FunFam" id="1.10.150.20:FF:000012">
    <property type="entry name" value="Holliday junction ATP-dependent DNA helicase RuvA"/>
    <property type="match status" value="1"/>
</dbReference>
<dbReference type="FunFam" id="1.10.8.10:FF:000008">
    <property type="entry name" value="Holliday junction ATP-dependent DNA helicase RuvA"/>
    <property type="match status" value="1"/>
</dbReference>
<dbReference type="FunFam" id="2.40.50.140:FF:000083">
    <property type="entry name" value="Holliday junction ATP-dependent DNA helicase RuvA"/>
    <property type="match status" value="1"/>
</dbReference>
<dbReference type="Gene3D" id="1.10.150.20">
    <property type="entry name" value="5' to 3' exonuclease, C-terminal subdomain"/>
    <property type="match status" value="1"/>
</dbReference>
<dbReference type="Gene3D" id="1.10.8.10">
    <property type="entry name" value="DNA helicase RuvA subunit, C-terminal domain"/>
    <property type="match status" value="1"/>
</dbReference>
<dbReference type="Gene3D" id="2.40.50.140">
    <property type="entry name" value="Nucleic acid-binding proteins"/>
    <property type="match status" value="1"/>
</dbReference>
<dbReference type="HAMAP" id="MF_00031">
    <property type="entry name" value="DNA_HJ_migration_RuvA"/>
    <property type="match status" value="1"/>
</dbReference>
<dbReference type="InterPro" id="IPR013849">
    <property type="entry name" value="DNA_helicase_Holl-junc_RuvA_I"/>
</dbReference>
<dbReference type="InterPro" id="IPR003583">
    <property type="entry name" value="Hlx-hairpin-Hlx_DNA-bd_motif"/>
</dbReference>
<dbReference type="InterPro" id="IPR012340">
    <property type="entry name" value="NA-bd_OB-fold"/>
</dbReference>
<dbReference type="InterPro" id="IPR000085">
    <property type="entry name" value="RuvA"/>
</dbReference>
<dbReference type="InterPro" id="IPR010994">
    <property type="entry name" value="RuvA_2-like"/>
</dbReference>
<dbReference type="InterPro" id="IPR011114">
    <property type="entry name" value="RuvA_C"/>
</dbReference>
<dbReference type="InterPro" id="IPR036267">
    <property type="entry name" value="RuvA_C_sf"/>
</dbReference>
<dbReference type="NCBIfam" id="TIGR00084">
    <property type="entry name" value="ruvA"/>
    <property type="match status" value="1"/>
</dbReference>
<dbReference type="Pfam" id="PF14520">
    <property type="entry name" value="HHH_5"/>
    <property type="match status" value="1"/>
</dbReference>
<dbReference type="Pfam" id="PF07499">
    <property type="entry name" value="RuvA_C"/>
    <property type="match status" value="1"/>
</dbReference>
<dbReference type="Pfam" id="PF01330">
    <property type="entry name" value="RuvA_N"/>
    <property type="match status" value="1"/>
</dbReference>
<dbReference type="SMART" id="SM00278">
    <property type="entry name" value="HhH1"/>
    <property type="match status" value="2"/>
</dbReference>
<dbReference type="SUPFAM" id="SSF46929">
    <property type="entry name" value="DNA helicase RuvA subunit, C-terminal domain"/>
    <property type="match status" value="1"/>
</dbReference>
<dbReference type="SUPFAM" id="SSF50249">
    <property type="entry name" value="Nucleic acid-binding proteins"/>
    <property type="match status" value="1"/>
</dbReference>
<dbReference type="SUPFAM" id="SSF47781">
    <property type="entry name" value="RuvA domain 2-like"/>
    <property type="match status" value="1"/>
</dbReference>
<reference key="1">
    <citation type="journal article" date="2005" name="Nucleic Acids Res.">
        <title>The genome sequence of Salmonella enterica serovar Choleraesuis, a highly invasive and resistant zoonotic pathogen.</title>
        <authorList>
            <person name="Chiu C.-H."/>
            <person name="Tang P."/>
            <person name="Chu C."/>
            <person name="Hu S."/>
            <person name="Bao Q."/>
            <person name="Yu J."/>
            <person name="Chou Y.-Y."/>
            <person name="Wang H.-S."/>
            <person name="Lee Y.-S."/>
        </authorList>
    </citation>
    <scope>NUCLEOTIDE SEQUENCE [LARGE SCALE GENOMIC DNA]</scope>
    <source>
        <strain>SC-B67</strain>
    </source>
</reference>
<keyword id="KW-0963">Cytoplasm</keyword>
<keyword id="KW-0227">DNA damage</keyword>
<keyword id="KW-0233">DNA recombination</keyword>
<keyword id="KW-0234">DNA repair</keyword>
<keyword id="KW-0238">DNA-binding</keyword>
<protein>
    <recommendedName>
        <fullName evidence="1">Holliday junction branch migration complex subunit RuvA</fullName>
    </recommendedName>
</protein>
<gene>
    <name evidence="1" type="primary">ruvA</name>
    <name type="ordered locus">SCH_1903</name>
</gene>
<feature type="chain" id="PRO_0000224904" description="Holliday junction branch migration complex subunit RuvA">
    <location>
        <begin position="1"/>
        <end position="203"/>
    </location>
</feature>
<feature type="region of interest" description="Domain I" evidence="1">
    <location>
        <begin position="1"/>
        <end position="64"/>
    </location>
</feature>
<feature type="region of interest" description="Domain II" evidence="1">
    <location>
        <begin position="65"/>
        <end position="142"/>
    </location>
</feature>
<feature type="region of interest" description="Flexible linker" evidence="1">
    <location>
        <begin position="143"/>
        <end position="154"/>
    </location>
</feature>
<feature type="region of interest" description="Domain III" evidence="1">
    <location>
        <begin position="155"/>
        <end position="203"/>
    </location>
</feature>
<evidence type="ECO:0000255" key="1">
    <source>
        <dbReference type="HAMAP-Rule" id="MF_00031"/>
    </source>
</evidence>